<accession>O13686</accession>
<protein>
    <recommendedName>
        <fullName>Uncharacterized RWD, RING finger and WD repeat-containing protein C11E3.05</fullName>
    </recommendedName>
</protein>
<evidence type="ECO:0000250" key="1"/>
<evidence type="ECO:0000255" key="2">
    <source>
        <dbReference type="PROSITE-ProRule" id="PRU00179"/>
    </source>
</evidence>
<evidence type="ECO:0000256" key="3">
    <source>
        <dbReference type="SAM" id="MobiDB-lite"/>
    </source>
</evidence>
<evidence type="ECO:0000269" key="4">
    <source>
    </source>
</evidence>
<evidence type="ECO:0000305" key="5"/>
<reference key="1">
    <citation type="journal article" date="2002" name="Nature">
        <title>The genome sequence of Schizosaccharomyces pombe.</title>
        <authorList>
            <person name="Wood V."/>
            <person name="Gwilliam R."/>
            <person name="Rajandream M.A."/>
            <person name="Lyne M.H."/>
            <person name="Lyne R."/>
            <person name="Stewart A."/>
            <person name="Sgouros J.G."/>
            <person name="Peat N."/>
            <person name="Hayles J."/>
            <person name="Baker S.G."/>
            <person name="Basham D."/>
            <person name="Bowman S."/>
            <person name="Brooks K."/>
            <person name="Brown D."/>
            <person name="Brown S."/>
            <person name="Chillingworth T."/>
            <person name="Churcher C.M."/>
            <person name="Collins M."/>
            <person name="Connor R."/>
            <person name="Cronin A."/>
            <person name="Davis P."/>
            <person name="Feltwell T."/>
            <person name="Fraser A."/>
            <person name="Gentles S."/>
            <person name="Goble A."/>
            <person name="Hamlin N."/>
            <person name="Harris D.E."/>
            <person name="Hidalgo J."/>
            <person name="Hodgson G."/>
            <person name="Holroyd S."/>
            <person name="Hornsby T."/>
            <person name="Howarth S."/>
            <person name="Huckle E.J."/>
            <person name="Hunt S."/>
            <person name="Jagels K."/>
            <person name="James K.D."/>
            <person name="Jones L."/>
            <person name="Jones M."/>
            <person name="Leather S."/>
            <person name="McDonald S."/>
            <person name="McLean J."/>
            <person name="Mooney P."/>
            <person name="Moule S."/>
            <person name="Mungall K.L."/>
            <person name="Murphy L.D."/>
            <person name="Niblett D."/>
            <person name="Odell C."/>
            <person name="Oliver K."/>
            <person name="O'Neil S."/>
            <person name="Pearson D."/>
            <person name="Quail M.A."/>
            <person name="Rabbinowitsch E."/>
            <person name="Rutherford K.M."/>
            <person name="Rutter S."/>
            <person name="Saunders D."/>
            <person name="Seeger K."/>
            <person name="Sharp S."/>
            <person name="Skelton J."/>
            <person name="Simmonds M.N."/>
            <person name="Squares R."/>
            <person name="Squares S."/>
            <person name="Stevens K."/>
            <person name="Taylor K."/>
            <person name="Taylor R.G."/>
            <person name="Tivey A."/>
            <person name="Walsh S.V."/>
            <person name="Warren T."/>
            <person name="Whitehead S."/>
            <person name="Woodward J.R."/>
            <person name="Volckaert G."/>
            <person name="Aert R."/>
            <person name="Robben J."/>
            <person name="Grymonprez B."/>
            <person name="Weltjens I."/>
            <person name="Vanstreels E."/>
            <person name="Rieger M."/>
            <person name="Schaefer M."/>
            <person name="Mueller-Auer S."/>
            <person name="Gabel C."/>
            <person name="Fuchs M."/>
            <person name="Duesterhoeft A."/>
            <person name="Fritzc C."/>
            <person name="Holzer E."/>
            <person name="Moestl D."/>
            <person name="Hilbert H."/>
            <person name="Borzym K."/>
            <person name="Langer I."/>
            <person name="Beck A."/>
            <person name="Lehrach H."/>
            <person name="Reinhardt R."/>
            <person name="Pohl T.M."/>
            <person name="Eger P."/>
            <person name="Zimmermann W."/>
            <person name="Wedler H."/>
            <person name="Wambutt R."/>
            <person name="Purnelle B."/>
            <person name="Goffeau A."/>
            <person name="Cadieu E."/>
            <person name="Dreano S."/>
            <person name="Gloux S."/>
            <person name="Lelaure V."/>
            <person name="Mottier S."/>
            <person name="Galibert F."/>
            <person name="Aves S.J."/>
            <person name="Xiang Z."/>
            <person name="Hunt C."/>
            <person name="Moore K."/>
            <person name="Hurst S.M."/>
            <person name="Lucas M."/>
            <person name="Rochet M."/>
            <person name="Gaillardin C."/>
            <person name="Tallada V.A."/>
            <person name="Garzon A."/>
            <person name="Thode G."/>
            <person name="Daga R.R."/>
            <person name="Cruzado L."/>
            <person name="Jimenez J."/>
            <person name="Sanchez M."/>
            <person name="del Rey F."/>
            <person name="Benito J."/>
            <person name="Dominguez A."/>
            <person name="Revuelta J.L."/>
            <person name="Moreno S."/>
            <person name="Armstrong J."/>
            <person name="Forsburg S.L."/>
            <person name="Cerutti L."/>
            <person name="Lowe T."/>
            <person name="McCombie W.R."/>
            <person name="Paulsen I."/>
            <person name="Potashkin J."/>
            <person name="Shpakovski G.V."/>
            <person name="Ussery D."/>
            <person name="Barrell B.G."/>
            <person name="Nurse P."/>
        </authorList>
    </citation>
    <scope>NUCLEOTIDE SEQUENCE [LARGE SCALE GENOMIC DNA]</scope>
    <source>
        <strain>972 / ATCC 24843</strain>
    </source>
</reference>
<reference key="2">
    <citation type="journal article" date="2008" name="J. Proteome Res.">
        <title>Phosphoproteome analysis of fission yeast.</title>
        <authorList>
            <person name="Wilson-Grady J.T."/>
            <person name="Villen J."/>
            <person name="Gygi S.P."/>
        </authorList>
    </citation>
    <scope>PHOSPHORYLATION [LARGE SCALE ANALYSIS] AT SER-24</scope>
    <scope>IDENTIFICATION BY MASS SPECTROMETRY</scope>
</reference>
<gene>
    <name type="ORF">SPAC11E3.05</name>
</gene>
<feature type="chain" id="PRO_0000310741" description="Uncharacterized RWD, RING finger and WD repeat-containing protein C11E3.05">
    <location>
        <begin position="1"/>
        <end position="1323"/>
    </location>
</feature>
<feature type="repeat" description="WD 1">
    <location>
        <begin position="271"/>
        <end position="314"/>
    </location>
</feature>
<feature type="repeat" description="WD 2">
    <location>
        <begin position="320"/>
        <end position="360"/>
    </location>
</feature>
<feature type="repeat" description="WD 3">
    <location>
        <begin position="364"/>
        <end position="403"/>
    </location>
</feature>
<feature type="repeat" description="WD 4">
    <location>
        <begin position="409"/>
        <end position="449"/>
    </location>
</feature>
<feature type="repeat" description="WD 5">
    <location>
        <begin position="453"/>
        <end position="494"/>
    </location>
</feature>
<feature type="repeat" description="WD 6">
    <location>
        <begin position="502"/>
        <end position="551"/>
    </location>
</feature>
<feature type="domain" description="RWD" evidence="2">
    <location>
        <begin position="671"/>
        <end position="779"/>
    </location>
</feature>
<feature type="zinc finger region" description="RING-type; degenerate">
    <location>
        <begin position="1265"/>
        <end position="1309"/>
    </location>
</feature>
<feature type="region of interest" description="Disordered" evidence="3">
    <location>
        <begin position="1"/>
        <end position="57"/>
    </location>
</feature>
<feature type="region of interest" description="Disordered" evidence="3">
    <location>
        <begin position="79"/>
        <end position="112"/>
    </location>
</feature>
<feature type="region of interest" description="Disordered" evidence="3">
    <location>
        <begin position="879"/>
        <end position="904"/>
    </location>
</feature>
<feature type="compositionally biased region" description="Basic and acidic residues" evidence="3">
    <location>
        <begin position="1"/>
        <end position="11"/>
    </location>
</feature>
<feature type="compositionally biased region" description="Low complexity" evidence="3">
    <location>
        <begin position="12"/>
        <end position="21"/>
    </location>
</feature>
<feature type="compositionally biased region" description="Basic and acidic residues" evidence="3">
    <location>
        <begin position="27"/>
        <end position="40"/>
    </location>
</feature>
<feature type="compositionally biased region" description="Polar residues" evidence="3">
    <location>
        <begin position="42"/>
        <end position="57"/>
    </location>
</feature>
<feature type="compositionally biased region" description="Polar residues" evidence="3">
    <location>
        <begin position="80"/>
        <end position="105"/>
    </location>
</feature>
<feature type="compositionally biased region" description="Polar residues" evidence="3">
    <location>
        <begin position="879"/>
        <end position="888"/>
    </location>
</feature>
<feature type="modified residue" description="Phosphoserine" evidence="4">
    <location>
        <position position="24"/>
    </location>
</feature>
<sequence>MRELQGDDSSRKSPPSDSVVKNSSPIDYEHSLKSLQDERTLNYPNKQFNSENPSSYYNMDDSGELCNFELEKDSLESMIHESSTALSAQSNTAQDGDQLASSSTISKDHSETLDNKLNDSKILIKKASNSFANFSESVRSSTIVAYSQTPTQRLQGLTSISSSSFDDGSYGSRRISFNSQGVSGRLRRNMDSTVIIPSEDEDLQLPSNSNSNVEYGPFDSTTFDRQLSIEVNQPVGAMSLSPCGRDIALASRYGLLVLDLDNPYNPPRMLRHSTPWEVADTQWNVHAARDQWVVSTSSQKTIVWNLALPNDRAIEFMLHGHTRAVTDMNWHRQNPDVLATCSIDSSVHCWDLRSPRFPVNSFYDWHNGATQVKWNYKNPHILASSHGRLVRIWDDRYGSAPLHTIKTSENITKINGLEFNRACETRLLTCAMDRTVKFWNYEKSTEEPEHLITTDSPVWKARFTPFGDGVILMPQRGDNSVHMYDCRNLDKEGPRAVHRFAGHTDQVKEFLWRCRGEDVFDRDLRDFQLITWSKDHHVRLWPIGNDILNSMGHDRTKPVPFKLTRLGAKYRTYSREPLKQSLINTECDSSDAMNSFDSNFGAERANTSDLSRGFVAFANRKKSKYNLPGSSGFMTRSTKSTNPMTPLNWLRGISMGRLGNADWEVPQNLGEELSWIGQKYSNVSFEKIDVAERTCTISLNAPILPDDGYAYIRLHVYFPNNYPISATPVFQLERSSAFNDEQFNYVFNTLTSISDQCISSHKYCMDACLSYLSGNLSVDEIWKLGFQKDNSDSSSESSADIFQDVFPSMPDFRGGDRGLSHKHQNIPLPKTCAAIFCGNDELVCFFTIKADESAAQATANRETHGRQKLFESFGVLDSSNSVADSDSTNYDDENSLNRGGTSESDSEFIWDVDESNSGSIVFPKSKTSINLNNINSASASIMGSRFGAADIFMSKRPSTKGSNRPSILLSKPSHDFHVVRIISMSKYLPVKRALAAEYVVDTGDKVTVCNKNAEVSAKHNYYRLAKVWLMLGRLLGHLSRTENKDHINDEEAFPWLKSPLAKWVVNSLLDYYASQCNTQMLAMLACVLDIPNPKKQSGNTSADQVLFNQPKQVTEKLGVQLNLPKTKILEKVSSHSLAQITALREKEPKDADSTYSKEKIFSATSTVHLQLMDYDKQNNDFVDAQEIAYTKLLQQKFIQWRATYAEQLDLWGFFIPKLEMLKFNAHEFSSPSEKTLVNHCNSCNSTTSNTRICEKCYSLVPRMSCTFCCLSIHGLCIVCGLCLHVMHEDCYKEWFSNGDSISQSCSSGCGCKCQFQHMSLEKV</sequence>
<proteinExistence type="evidence at protein level"/>
<dbReference type="EMBL" id="CU329670">
    <property type="protein sequence ID" value="CAB11184.1"/>
    <property type="molecule type" value="Genomic_DNA"/>
</dbReference>
<dbReference type="PIR" id="T37533">
    <property type="entry name" value="T37533"/>
</dbReference>
<dbReference type="SMR" id="O13686"/>
<dbReference type="BioGRID" id="278367">
    <property type="interactions" value="10"/>
</dbReference>
<dbReference type="FunCoup" id="O13686">
    <property type="interactions" value="247"/>
</dbReference>
<dbReference type="STRING" id="284812.O13686"/>
<dbReference type="iPTMnet" id="O13686"/>
<dbReference type="PaxDb" id="4896-SPAC11E3.05.1"/>
<dbReference type="EnsemblFungi" id="SPAC11E3.05.1">
    <property type="protein sequence ID" value="SPAC11E3.05.1:pep"/>
    <property type="gene ID" value="SPAC11E3.05"/>
</dbReference>
<dbReference type="KEGG" id="spo:2541877"/>
<dbReference type="PomBase" id="SPAC11E3.05"/>
<dbReference type="VEuPathDB" id="FungiDB:SPAC11E3.05"/>
<dbReference type="eggNOG" id="KOG0309">
    <property type="taxonomic scope" value="Eukaryota"/>
</dbReference>
<dbReference type="HOGENOM" id="CLU_001497_3_0_1"/>
<dbReference type="InParanoid" id="O13686"/>
<dbReference type="OMA" id="HRRETCL"/>
<dbReference type="PhylomeDB" id="O13686"/>
<dbReference type="PRO" id="PR:O13686"/>
<dbReference type="Proteomes" id="UP000002485">
    <property type="component" value="Chromosome I"/>
</dbReference>
<dbReference type="GO" id="GO:0000329">
    <property type="term" value="C:fungal-type vacuole membrane"/>
    <property type="evidence" value="ECO:0000266"/>
    <property type="project" value="PomBase"/>
</dbReference>
<dbReference type="GO" id="GO:1990130">
    <property type="term" value="C:GATOR1 complex"/>
    <property type="evidence" value="ECO:0000315"/>
    <property type="project" value="PomBase"/>
</dbReference>
<dbReference type="GO" id="GO:0061700">
    <property type="term" value="C:GATOR2 complex"/>
    <property type="evidence" value="ECO:0000353"/>
    <property type="project" value="PomBase"/>
</dbReference>
<dbReference type="GO" id="GO:0035859">
    <property type="term" value="C:Seh1-associated complex"/>
    <property type="evidence" value="ECO:0000315"/>
    <property type="project" value="PomBase"/>
</dbReference>
<dbReference type="GO" id="GO:0005774">
    <property type="term" value="C:vacuolar membrane"/>
    <property type="evidence" value="ECO:0000269"/>
    <property type="project" value="PomBase"/>
</dbReference>
<dbReference type="GO" id="GO:0035591">
    <property type="term" value="F:signaling adaptor activity"/>
    <property type="evidence" value="ECO:0000353"/>
    <property type="project" value="PomBase"/>
</dbReference>
<dbReference type="GO" id="GO:0061630">
    <property type="term" value="F:ubiquitin protein ligase activity"/>
    <property type="evidence" value="ECO:0000255"/>
    <property type="project" value="PomBase"/>
</dbReference>
<dbReference type="GO" id="GO:0008270">
    <property type="term" value="F:zinc ion binding"/>
    <property type="evidence" value="ECO:0000255"/>
    <property type="project" value="PomBase"/>
</dbReference>
<dbReference type="GO" id="GO:0034198">
    <property type="term" value="P:cellular response to amino acid starvation"/>
    <property type="evidence" value="ECO:0000318"/>
    <property type="project" value="GO_Central"/>
</dbReference>
<dbReference type="GO" id="GO:1904262">
    <property type="term" value="P:negative regulation of TORC1 signaling"/>
    <property type="evidence" value="ECO:0000315"/>
    <property type="project" value="PomBase"/>
</dbReference>
<dbReference type="GO" id="GO:1904263">
    <property type="term" value="P:positive regulation of TORC1 signaling"/>
    <property type="evidence" value="ECO:0000318"/>
    <property type="project" value="GO_Central"/>
</dbReference>
<dbReference type="CDD" id="cd16488">
    <property type="entry name" value="mRING-H2-C3H3C2_Mio-like"/>
    <property type="match status" value="1"/>
</dbReference>
<dbReference type="Gene3D" id="2.130.10.10">
    <property type="entry name" value="YVTN repeat-like/Quinoprotein amine dehydrogenase"/>
    <property type="match status" value="2"/>
</dbReference>
<dbReference type="InterPro" id="IPR006575">
    <property type="entry name" value="RWD_dom"/>
</dbReference>
<dbReference type="InterPro" id="IPR015943">
    <property type="entry name" value="WD40/YVTN_repeat-like_dom_sf"/>
</dbReference>
<dbReference type="InterPro" id="IPR036322">
    <property type="entry name" value="WD40_repeat_dom_sf"/>
</dbReference>
<dbReference type="InterPro" id="IPR001680">
    <property type="entry name" value="WD40_rpt"/>
</dbReference>
<dbReference type="InterPro" id="IPR049567">
    <property type="entry name" value="WDR59-like"/>
</dbReference>
<dbReference type="InterPro" id="IPR049566">
    <property type="entry name" value="WDR59_RTC1-like_RING_Znf"/>
</dbReference>
<dbReference type="PANTHER" id="PTHR46170">
    <property type="entry name" value="GATOR COMPLEX PROTEIN WDR59"/>
    <property type="match status" value="1"/>
</dbReference>
<dbReference type="PANTHER" id="PTHR46170:SF1">
    <property type="entry name" value="GATOR COMPLEX PROTEIN WDR59"/>
    <property type="match status" value="1"/>
</dbReference>
<dbReference type="Pfam" id="PF00400">
    <property type="entry name" value="WD40"/>
    <property type="match status" value="2"/>
</dbReference>
<dbReference type="Pfam" id="PF17120">
    <property type="entry name" value="zf-RING_16"/>
    <property type="match status" value="1"/>
</dbReference>
<dbReference type="SMART" id="SM00591">
    <property type="entry name" value="RWD"/>
    <property type="match status" value="1"/>
</dbReference>
<dbReference type="SMART" id="SM00320">
    <property type="entry name" value="WD40"/>
    <property type="match status" value="4"/>
</dbReference>
<dbReference type="SUPFAM" id="SSF50978">
    <property type="entry name" value="WD40 repeat-like"/>
    <property type="match status" value="1"/>
</dbReference>
<dbReference type="PROSITE" id="PS50908">
    <property type="entry name" value="RWD"/>
    <property type="match status" value="1"/>
</dbReference>
<dbReference type="PROSITE" id="PS50082">
    <property type="entry name" value="WD_REPEATS_2"/>
    <property type="match status" value="1"/>
</dbReference>
<dbReference type="PROSITE" id="PS50294">
    <property type="entry name" value="WD_REPEATS_REGION"/>
    <property type="match status" value="1"/>
</dbReference>
<name>WDR59_SCHPO</name>
<keyword id="KW-0479">Metal-binding</keyword>
<keyword id="KW-0597">Phosphoprotein</keyword>
<keyword id="KW-1185">Reference proteome</keyword>
<keyword id="KW-0677">Repeat</keyword>
<keyword id="KW-0853">WD repeat</keyword>
<keyword id="KW-0862">Zinc</keyword>
<keyword id="KW-0863">Zinc-finger</keyword>
<comment type="function">
    <text evidence="1">May be involved in telomere capping.</text>
</comment>
<comment type="similarity">
    <text evidence="5">Belongs to the WD repeat WDR59 family.</text>
</comment>
<organism>
    <name type="scientific">Schizosaccharomyces pombe (strain 972 / ATCC 24843)</name>
    <name type="common">Fission yeast</name>
    <dbReference type="NCBI Taxonomy" id="284812"/>
    <lineage>
        <taxon>Eukaryota</taxon>
        <taxon>Fungi</taxon>
        <taxon>Dikarya</taxon>
        <taxon>Ascomycota</taxon>
        <taxon>Taphrinomycotina</taxon>
        <taxon>Schizosaccharomycetes</taxon>
        <taxon>Schizosaccharomycetales</taxon>
        <taxon>Schizosaccharomycetaceae</taxon>
        <taxon>Schizosaccharomyces</taxon>
    </lineage>
</organism>